<gene>
    <name evidence="2" type="primary">cheB</name>
    <name type="ordered locus">STM1917</name>
</gene>
<organism>
    <name type="scientific">Salmonella typhimurium (strain LT2 / SGSC1412 / ATCC 700720)</name>
    <dbReference type="NCBI Taxonomy" id="99287"/>
    <lineage>
        <taxon>Bacteria</taxon>
        <taxon>Pseudomonadati</taxon>
        <taxon>Pseudomonadota</taxon>
        <taxon>Gammaproteobacteria</taxon>
        <taxon>Enterobacterales</taxon>
        <taxon>Enterobacteriaceae</taxon>
        <taxon>Salmonella</taxon>
    </lineage>
</organism>
<feature type="chain" id="PRO_0000158027" description="Protein-glutamate methylesterase/protein-glutamine glutaminase">
    <location>
        <begin position="1"/>
        <end position="349"/>
    </location>
</feature>
<feature type="domain" description="Response regulatory" evidence="2">
    <location>
        <begin position="5"/>
        <end position="122"/>
    </location>
</feature>
<feature type="domain" description="CheB-type methylesterase" evidence="2">
    <location>
        <begin position="152"/>
        <end position="344"/>
    </location>
</feature>
<feature type="active site" evidence="2 11">
    <location>
        <position position="164"/>
    </location>
</feature>
<feature type="active site" evidence="2 11">
    <location>
        <position position="190"/>
    </location>
</feature>
<feature type="active site" evidence="2 11">
    <location>
        <position position="286"/>
    </location>
</feature>
<feature type="modified residue" description="4-aspartylphosphate" evidence="2 8">
    <location>
        <position position="56"/>
    </location>
</feature>
<feature type="mutagenesis site" description="Slight increase in methylesterase activity." evidence="7">
    <original>C</original>
    <variation>A</variation>
    <location>
        <position position="207"/>
    </location>
</feature>
<feature type="mutagenesis site" description="Loss of methylesterase activity." evidence="7">
    <original>G</original>
    <variation>V</variation>
    <location>
        <position position="284"/>
    </location>
</feature>
<feature type="mutagenesis site" description="Loss of methylesterase activity." evidence="7">
    <original>C</original>
    <variation>A</variation>
    <location>
        <position position="309"/>
    </location>
</feature>
<feature type="strand" evidence="12">
    <location>
        <begin position="4"/>
        <end position="9"/>
    </location>
</feature>
<feature type="helix" evidence="12">
    <location>
        <begin position="13"/>
        <end position="24"/>
    </location>
</feature>
<feature type="strand" evidence="12">
    <location>
        <begin position="29"/>
        <end position="37"/>
    </location>
</feature>
<feature type="helix" evidence="12">
    <location>
        <begin position="38"/>
        <end position="48"/>
    </location>
</feature>
<feature type="strand" evidence="12">
    <location>
        <begin position="51"/>
        <end position="56"/>
    </location>
</feature>
<feature type="strand" evidence="12">
    <location>
        <begin position="60"/>
        <end position="62"/>
    </location>
</feature>
<feature type="helix" evidence="12">
    <location>
        <begin position="64"/>
        <end position="73"/>
    </location>
</feature>
<feature type="strand" evidence="12">
    <location>
        <begin position="79"/>
        <end position="83"/>
    </location>
</feature>
<feature type="helix" evidence="12">
    <location>
        <begin position="87"/>
        <end position="99"/>
    </location>
</feature>
<feature type="strand" evidence="12">
    <location>
        <begin position="103"/>
        <end position="106"/>
    </location>
</feature>
<feature type="strand" evidence="12">
    <location>
        <begin position="108"/>
        <end position="111"/>
    </location>
</feature>
<feature type="helix" evidence="12">
    <location>
        <begin position="116"/>
        <end position="132"/>
    </location>
</feature>
<feature type="helix" evidence="12">
    <location>
        <begin position="135"/>
        <end position="138"/>
    </location>
</feature>
<feature type="strand" evidence="13">
    <location>
        <begin position="153"/>
        <end position="155"/>
    </location>
</feature>
<feature type="strand" evidence="13">
    <location>
        <begin position="158"/>
        <end position="163"/>
    </location>
</feature>
<feature type="helix" evidence="13">
    <location>
        <begin position="167"/>
        <end position="175"/>
    </location>
</feature>
<feature type="strand" evidence="13">
    <location>
        <begin position="184"/>
        <end position="189"/>
    </location>
</feature>
<feature type="helix" evidence="13">
    <location>
        <begin position="195"/>
        <end position="206"/>
    </location>
</feature>
<feature type="strand" evidence="13">
    <location>
        <begin position="208"/>
        <end position="213"/>
    </location>
</feature>
<feature type="strand" evidence="13">
    <location>
        <begin position="224"/>
        <end position="227"/>
    </location>
</feature>
<feature type="strand" evidence="13">
    <location>
        <begin position="232"/>
        <end position="239"/>
    </location>
</feature>
<feature type="strand" evidence="13">
    <location>
        <begin position="242"/>
        <end position="248"/>
    </location>
</feature>
<feature type="strand" evidence="12">
    <location>
        <begin position="253"/>
        <end position="255"/>
    </location>
</feature>
<feature type="strand" evidence="13">
    <location>
        <begin position="256"/>
        <end position="258"/>
    </location>
</feature>
<feature type="helix" evidence="13">
    <location>
        <begin position="260"/>
        <end position="270"/>
    </location>
</feature>
<feature type="helix" evidence="13">
    <location>
        <begin position="272"/>
        <end position="274"/>
    </location>
</feature>
<feature type="strand" evidence="13">
    <location>
        <begin position="275"/>
        <end position="279"/>
    </location>
</feature>
<feature type="strand" evidence="13">
    <location>
        <begin position="281"/>
        <end position="285"/>
    </location>
</feature>
<feature type="helix" evidence="13">
    <location>
        <begin position="288"/>
        <end position="296"/>
    </location>
</feature>
<feature type="strand" evidence="13">
    <location>
        <begin position="300"/>
        <end position="304"/>
    </location>
</feature>
<feature type="turn" evidence="13">
    <location>
        <begin position="306"/>
        <end position="308"/>
    </location>
</feature>
<feature type="strand" evidence="13">
    <location>
        <begin position="310"/>
        <end position="313"/>
    </location>
</feature>
<feature type="helix" evidence="13">
    <location>
        <begin position="314"/>
        <end position="320"/>
    </location>
</feature>
<feature type="strand" evidence="13">
    <location>
        <begin position="325"/>
        <end position="328"/>
    </location>
</feature>
<feature type="helix" evidence="13">
    <location>
        <begin position="330"/>
        <end position="332"/>
    </location>
</feature>
<feature type="helix" evidence="13">
    <location>
        <begin position="333"/>
        <end position="341"/>
    </location>
</feature>
<feature type="turn" evidence="13">
    <location>
        <begin position="342"/>
        <end position="346"/>
    </location>
</feature>
<protein>
    <recommendedName>
        <fullName evidence="2 10">Protein-glutamate methylesterase/protein-glutamine glutaminase</fullName>
        <ecNumber evidence="2 4 5 9">3.1.1.61</ecNumber>
        <ecNumber evidence="1 2">3.5.1.44</ecNumber>
    </recommendedName>
</protein>
<accession>P04042</accession>
<dbReference type="EC" id="3.1.1.61" evidence="2 4 5 9"/>
<dbReference type="EC" id="3.5.1.44" evidence="1 2"/>
<dbReference type="EMBL" id="AE006468">
    <property type="protein sequence ID" value="AAL20833.1"/>
    <property type="molecule type" value="Genomic_DNA"/>
</dbReference>
<dbReference type="PIR" id="A00547">
    <property type="entry name" value="XYEBET"/>
</dbReference>
<dbReference type="RefSeq" id="NP_460874.1">
    <property type="nucleotide sequence ID" value="NC_003197.2"/>
</dbReference>
<dbReference type="RefSeq" id="WP_000036392.1">
    <property type="nucleotide sequence ID" value="NC_003197.2"/>
</dbReference>
<dbReference type="PDB" id="1A2O">
    <property type="method" value="X-ray"/>
    <property type="resolution" value="2.40 A"/>
    <property type="chains" value="A/B=1-349"/>
</dbReference>
<dbReference type="PDB" id="1CHD">
    <property type="method" value="X-ray"/>
    <property type="resolution" value="1.75 A"/>
    <property type="chains" value="A=147-349"/>
</dbReference>
<dbReference type="PDBsum" id="1A2O"/>
<dbReference type="PDBsum" id="1CHD"/>
<dbReference type="SMR" id="P04042"/>
<dbReference type="STRING" id="99287.STM1917"/>
<dbReference type="PaxDb" id="99287-STM1917"/>
<dbReference type="GeneID" id="1253438"/>
<dbReference type="KEGG" id="stm:STM1917"/>
<dbReference type="PATRIC" id="fig|99287.12.peg.2033"/>
<dbReference type="HOGENOM" id="CLU_000445_51_0_6"/>
<dbReference type="OMA" id="MLEMHRA"/>
<dbReference type="PhylomeDB" id="P04042"/>
<dbReference type="BioCyc" id="SENT99287:STM1917-MONOMER"/>
<dbReference type="EvolutionaryTrace" id="P04042"/>
<dbReference type="PHI-base" id="PHI:6461"/>
<dbReference type="Proteomes" id="UP000001014">
    <property type="component" value="Chromosome"/>
</dbReference>
<dbReference type="GO" id="GO:0005737">
    <property type="term" value="C:cytoplasm"/>
    <property type="evidence" value="ECO:0007669"/>
    <property type="project" value="UniProtKB-SubCell"/>
</dbReference>
<dbReference type="GO" id="GO:0000156">
    <property type="term" value="F:phosphorelay response regulator activity"/>
    <property type="evidence" value="ECO:0007669"/>
    <property type="project" value="InterPro"/>
</dbReference>
<dbReference type="GO" id="GO:0008984">
    <property type="term" value="F:protein-glutamate methylesterase activity"/>
    <property type="evidence" value="ECO:0007669"/>
    <property type="project" value="UniProtKB-UniRule"/>
</dbReference>
<dbReference type="GO" id="GO:0050568">
    <property type="term" value="F:protein-glutamine glutaminase activity"/>
    <property type="evidence" value="ECO:0007669"/>
    <property type="project" value="UniProtKB-UniRule"/>
</dbReference>
<dbReference type="GO" id="GO:0006935">
    <property type="term" value="P:chemotaxis"/>
    <property type="evidence" value="ECO:0007669"/>
    <property type="project" value="UniProtKB-UniRule"/>
</dbReference>
<dbReference type="CDD" id="cd16351">
    <property type="entry name" value="CheB_like"/>
    <property type="match status" value="1"/>
</dbReference>
<dbReference type="CDD" id="cd17541">
    <property type="entry name" value="REC_CheB-like"/>
    <property type="match status" value="1"/>
</dbReference>
<dbReference type="FunFam" id="3.40.50.180:FF:000001">
    <property type="entry name" value="Protein-glutamate methylesterase/protein-glutamine glutaminase"/>
    <property type="match status" value="1"/>
</dbReference>
<dbReference type="FunFam" id="3.40.50.2300:FF:000060">
    <property type="entry name" value="Protein-glutamate methylesterase/protein-glutamine glutaminase"/>
    <property type="match status" value="1"/>
</dbReference>
<dbReference type="Gene3D" id="3.40.50.2300">
    <property type="match status" value="1"/>
</dbReference>
<dbReference type="Gene3D" id="3.40.50.180">
    <property type="entry name" value="Methylesterase CheB, C-terminal domain"/>
    <property type="match status" value="1"/>
</dbReference>
<dbReference type="HAMAP" id="MF_00099">
    <property type="entry name" value="CheB_chemtxs"/>
    <property type="match status" value="1"/>
</dbReference>
<dbReference type="InterPro" id="IPR008248">
    <property type="entry name" value="CheB-like"/>
</dbReference>
<dbReference type="InterPro" id="IPR035909">
    <property type="entry name" value="CheB_C"/>
</dbReference>
<dbReference type="InterPro" id="IPR011006">
    <property type="entry name" value="CheY-like_superfamily"/>
</dbReference>
<dbReference type="InterPro" id="IPR000673">
    <property type="entry name" value="Sig_transdc_resp-reg_Me-estase"/>
</dbReference>
<dbReference type="InterPro" id="IPR001789">
    <property type="entry name" value="Sig_transdc_resp-reg_receiver"/>
</dbReference>
<dbReference type="NCBIfam" id="NF001965">
    <property type="entry name" value="PRK00742.1"/>
    <property type="match status" value="1"/>
</dbReference>
<dbReference type="NCBIfam" id="NF009206">
    <property type="entry name" value="PRK12555.1"/>
    <property type="match status" value="1"/>
</dbReference>
<dbReference type="PANTHER" id="PTHR42872">
    <property type="entry name" value="PROTEIN-GLUTAMATE METHYLESTERASE/PROTEIN-GLUTAMINE GLUTAMINASE"/>
    <property type="match status" value="1"/>
</dbReference>
<dbReference type="PANTHER" id="PTHR42872:SF6">
    <property type="entry name" value="PROTEIN-GLUTAMATE METHYLESTERASE_PROTEIN-GLUTAMINE GLUTAMINASE"/>
    <property type="match status" value="1"/>
</dbReference>
<dbReference type="Pfam" id="PF01339">
    <property type="entry name" value="CheB_methylest"/>
    <property type="match status" value="1"/>
</dbReference>
<dbReference type="Pfam" id="PF00072">
    <property type="entry name" value="Response_reg"/>
    <property type="match status" value="1"/>
</dbReference>
<dbReference type="PIRSF" id="PIRSF000876">
    <property type="entry name" value="RR_chemtxs_CheB"/>
    <property type="match status" value="1"/>
</dbReference>
<dbReference type="SMART" id="SM00448">
    <property type="entry name" value="REC"/>
    <property type="match status" value="1"/>
</dbReference>
<dbReference type="SUPFAM" id="SSF52172">
    <property type="entry name" value="CheY-like"/>
    <property type="match status" value="1"/>
</dbReference>
<dbReference type="SUPFAM" id="SSF52738">
    <property type="entry name" value="Methylesterase CheB, C-terminal domain"/>
    <property type="match status" value="1"/>
</dbReference>
<dbReference type="PROSITE" id="PS50122">
    <property type="entry name" value="CHEB"/>
    <property type="match status" value="1"/>
</dbReference>
<dbReference type="PROSITE" id="PS50110">
    <property type="entry name" value="RESPONSE_REGULATORY"/>
    <property type="match status" value="1"/>
</dbReference>
<evidence type="ECO:0000250" key="1">
    <source>
        <dbReference type="UniProtKB" id="P07330"/>
    </source>
</evidence>
<evidence type="ECO:0000255" key="2">
    <source>
        <dbReference type="HAMAP-Rule" id="MF_00099"/>
    </source>
</evidence>
<evidence type="ECO:0000269" key="3">
    <source>
    </source>
</evidence>
<evidence type="ECO:0000269" key="4">
    <source>
    </source>
</evidence>
<evidence type="ECO:0000269" key="5">
    <source>
    </source>
</evidence>
<evidence type="ECO:0000269" key="6">
    <source>
    </source>
</evidence>
<evidence type="ECO:0000269" key="7">
    <source>
    </source>
</evidence>
<evidence type="ECO:0000269" key="8">
    <source>
    </source>
</evidence>
<evidence type="ECO:0000269" key="9">
    <source>
    </source>
</evidence>
<evidence type="ECO:0000305" key="10"/>
<evidence type="ECO:0000305" key="11">
    <source>
    </source>
</evidence>
<evidence type="ECO:0007829" key="12">
    <source>
        <dbReference type="PDB" id="1A2O"/>
    </source>
</evidence>
<evidence type="ECO:0007829" key="13">
    <source>
        <dbReference type="PDB" id="1CHD"/>
    </source>
</evidence>
<keyword id="KW-0002">3D-structure</keyword>
<keyword id="KW-0145">Chemotaxis</keyword>
<keyword id="KW-0963">Cytoplasm</keyword>
<keyword id="KW-0903">Direct protein sequencing</keyword>
<keyword id="KW-0378">Hydrolase</keyword>
<keyword id="KW-0597">Phosphoprotein</keyword>
<keyword id="KW-1185">Reference proteome</keyword>
<name>CHEB_SALTY</name>
<reference key="1">
    <citation type="journal article" date="1985" name="J. Biol. Chem.">
        <title>Multiple forms of the CheB methylesterase in bacterial chemosensing.</title>
        <authorList>
            <person name="Simms S.A."/>
            <person name="Keane M.G."/>
            <person name="Stock J."/>
        </authorList>
    </citation>
    <scope>PROTEIN SEQUENCE</scope>
    <scope>FUNCTION</scope>
    <scope>CATALYTIC ACTIVITY</scope>
    <scope>DOMAIN</scope>
</reference>
<reference key="2">
    <citation type="journal article" date="2001" name="Nature">
        <title>Complete genome sequence of Salmonella enterica serovar Typhimurium LT2.</title>
        <authorList>
            <person name="McClelland M."/>
            <person name="Sanderson K.E."/>
            <person name="Spieth J."/>
            <person name="Clifton S.W."/>
            <person name="Latreille P."/>
            <person name="Courtney L."/>
            <person name="Porwollik S."/>
            <person name="Ali J."/>
            <person name="Dante M."/>
            <person name="Du F."/>
            <person name="Hou S."/>
            <person name="Layman D."/>
            <person name="Leonard S."/>
            <person name="Nguyen C."/>
            <person name="Scott K."/>
            <person name="Holmes A."/>
            <person name="Grewal N."/>
            <person name="Mulvaney E."/>
            <person name="Ryan E."/>
            <person name="Sun H."/>
            <person name="Florea L."/>
            <person name="Miller W."/>
            <person name="Stoneking T."/>
            <person name="Nhan M."/>
            <person name="Waterston R."/>
            <person name="Wilson R.K."/>
        </authorList>
    </citation>
    <scope>NUCLEOTIDE SEQUENCE [LARGE SCALE GENOMIC DNA]</scope>
    <source>
        <strain>LT2 / SGSC1412 / ATCC 700720</strain>
    </source>
</reference>
<reference key="3">
    <citation type="journal article" date="1987" name="J. Biol. Chem.">
        <title>Active site of the enzyme which demethylates receptors during bacterial chemotaxis.</title>
        <authorList>
            <person name="Simms S.A."/>
            <person name="Cornman E.W."/>
            <person name="Mottonen J."/>
            <person name="Stock J."/>
        </authorList>
    </citation>
    <scope>PROTEIN SEQUENCE OF 277-306</scope>
    <scope>MUTAGENESIS OF CYS-207; GLY-284 AND CYS-309</scope>
</reference>
<reference key="4">
    <citation type="journal article" date="1988" name="Cell">
        <title>Phosphorylation of three proteins in the signaling pathway of bacterial chemotaxis.</title>
        <authorList>
            <person name="Hess J.F."/>
            <person name="Oosawa K."/>
            <person name="Kaplan N."/>
            <person name="Simon M.I."/>
        </authorList>
    </citation>
    <scope>PHOSPHORYLATION</scope>
</reference>
<reference key="5">
    <citation type="journal article" date="1989" name="J. Biol. Chem.">
        <title>Phosphorylation of an N-terminal regulatory domain activates the CheB methylesterase in bacterial chemotaxis.</title>
        <authorList>
            <person name="Lupas A."/>
            <person name="Stock J."/>
        </authorList>
    </citation>
    <scope>FUNCTION</scope>
    <scope>CATALYTIC ACTIVITY</scope>
    <scope>ACTIVITY REGULATION</scope>
    <scope>PHOSPHORYLATION</scope>
</reference>
<reference key="6">
    <citation type="journal article" date="1998" name="Biochemistry">
        <title>Activation of methylesterase CheB: evidence of a dual role for the regulatory domain.</title>
        <authorList>
            <person name="Anand G.S."/>
            <person name="Goudreau P.N."/>
            <person name="Stock A.M."/>
        </authorList>
    </citation>
    <scope>CHARACTERIZATION</scope>
    <scope>FUNCTION</scope>
    <scope>CATALYTIC ACTIVITY</scope>
    <scope>ACTIVITY REGULATION</scope>
    <scope>DOMAIN</scope>
    <scope>PHOSPHORYLATION</scope>
</reference>
<reference key="7">
    <citation type="journal article" date="2010" name="Mol. Cell">
        <title>The c-di-GMP binding protein YcgR controls flagellar motor direction and speed to affect chemotaxis by a 'backstop brake' mechanism.</title>
        <authorList>
            <person name="Paul K."/>
            <person name="Nieto V."/>
            <person name="Carlquist W.C."/>
            <person name="Blair D.F."/>
            <person name="Harshey R.M."/>
        </authorList>
    </citation>
    <scope>DISRUPTION PHENOTYPE</scope>
    <source>
        <strain>ATCC 14028 / SGSC 2980 / CDC 6516-60 / NCTC 12023</strain>
    </source>
</reference>
<reference key="8">
    <citation type="journal article" date="1995" name="J. Mol. Biol.">
        <title>Crystal structure of the catalytic domain of the chemotaxis receptor methylesterase, CheB.</title>
        <authorList>
            <person name="West A.H."/>
            <person name="Martinez-Hackert E."/>
            <person name="Stock A.M."/>
        </authorList>
    </citation>
    <scope>X-RAY CRYSTALLOGRAPHY (1.75 ANGSTROMS) OF 152-349</scope>
    <scope>ACTIVE SITE</scope>
</reference>
<reference key="9">
    <citation type="journal article" date="1998" name="Proc. Natl. Acad. Sci. U.S.A.">
        <title>Structural basis for methylesterase CheB regulation by a phosphorylation-activated domain.</title>
        <authorList>
            <person name="Djordjevic S."/>
            <person name="Goudreau P.N."/>
            <person name="Xu Q."/>
            <person name="Stock A.M."/>
            <person name="West A.H."/>
        </authorList>
    </citation>
    <scope>X-RAY CRYSTALLOGRAPHY (2.4 ANGSTROMS)</scope>
    <scope>PHOSPHORYLATION AT ASP-56</scope>
</reference>
<proteinExistence type="evidence at protein level"/>
<sequence length="349" mass="37552">MSKIRVLSVDDSALMRQIMTEIINSHSDMEMVATAPDPLVARDLIKKFNPDVLTLDVEMPRMDGLDFLEKLMRLRPMPVVMVSSLTGKGSEVTLRALELGAIDFVTKPQLGIREGMLAYSEMIAEKVRTAARARIAAHKPMAAPTTLKAGPLLSSEKLIAIGASTGGTEAIRHVLQPLPLSSPAVIITQHMPPGFTRSFAERLNKLCQISVKEAEDGERVLPGHAYIAPGDKHMELARSGANYQIKIHDGPPVNRHRPSVDVLFHSVAKHAGRNAVGVILTGMGNDGAAGMLAMYQAGAWTIAQNEASCVVFGMPREAINMGGVSEVVDLSQVSQQMLAKISAGQAIRI</sequence>
<comment type="function">
    <text evidence="1 4 5 9">Involved in chemotaxis. Part of a chemotaxis signal transduction system that modulates chemotaxis in response to various stimuli. Catalyzes the demethylation of specific methylglutamate residues introduced into the chemoreceptors (methyl-accepting chemotaxis proteins or MCP) by CheR (PubMed:2677005, PubMed:2991277, PubMed:9760239). Also mediates the irreversible deamidation of specific glutamine residues to glutamic acid (By similarity).</text>
</comment>
<comment type="catalytic activity">
    <reaction evidence="2 4 5 9">
        <text>[protein]-L-glutamate 5-O-methyl ester + H2O = L-glutamyl-[protein] + methanol + H(+)</text>
        <dbReference type="Rhea" id="RHEA:23236"/>
        <dbReference type="Rhea" id="RHEA-COMP:10208"/>
        <dbReference type="Rhea" id="RHEA-COMP:10311"/>
        <dbReference type="ChEBI" id="CHEBI:15377"/>
        <dbReference type="ChEBI" id="CHEBI:15378"/>
        <dbReference type="ChEBI" id="CHEBI:17790"/>
        <dbReference type="ChEBI" id="CHEBI:29973"/>
        <dbReference type="ChEBI" id="CHEBI:82795"/>
        <dbReference type="EC" id="3.1.1.61"/>
    </reaction>
</comment>
<comment type="catalytic activity">
    <reaction evidence="1 2">
        <text>L-glutaminyl-[protein] + H2O = L-glutamyl-[protein] + NH4(+)</text>
        <dbReference type="Rhea" id="RHEA:16441"/>
        <dbReference type="Rhea" id="RHEA-COMP:10207"/>
        <dbReference type="Rhea" id="RHEA-COMP:10208"/>
        <dbReference type="ChEBI" id="CHEBI:15377"/>
        <dbReference type="ChEBI" id="CHEBI:28938"/>
        <dbReference type="ChEBI" id="CHEBI:29973"/>
        <dbReference type="ChEBI" id="CHEBI:30011"/>
        <dbReference type="EC" id="3.5.1.44"/>
    </reaction>
</comment>
<comment type="activity regulation">
    <text evidence="4 9">Phosphorylation of the N-terminal regulatory domain activates the methylesterase activity.</text>
</comment>
<comment type="subunit">
    <text evidence="1">Interacts with CheA.</text>
</comment>
<comment type="subcellular location">
    <subcellularLocation>
        <location evidence="1 2">Cytoplasm</location>
    </subcellularLocation>
</comment>
<comment type="domain">
    <text evidence="5 9">Contains a C-terminal catalytic domain, and an N-terminal region which modulates catalytic activity (PubMed:2991277, PubMed:9760239). The N-terminal domain is not essential for catalysis (PubMed:2991277).</text>
</comment>
<comment type="PTM">
    <text evidence="4 6 8 9">Phosphorylated by CheA (PubMed:2677005, PubMed:3280143, PubMed:9465023). Phosphorylation of the N-terminal regulatory domain activates the methylesterase activity (PubMed:2677005, PubMed:9760239).</text>
</comment>
<comment type="PTM">
    <text evidence="5">Two forms were isolated, the intact protein and a proteolytic fragment (147-349) that is 15-fold more active than its precursor.</text>
</comment>
<comment type="disruption phenotype">
    <text evidence="3">Cells lacking this gene display a strong clockwise motor bias; in combination with a yhjH disruption cells switch to a counterclockwise bias.</text>
</comment>
<comment type="similarity">
    <text evidence="2 10">Belongs to the CheB family.</text>
</comment>